<evidence type="ECO:0000250" key="1"/>
<evidence type="ECO:0000269" key="2">
    <source>
    </source>
</evidence>
<evidence type="ECO:0000305" key="3"/>
<comment type="function">
    <text evidence="2">Opens the cyclic ring of dihydroxy-phenylalanine (DOPA) between carbons 4 and 5, thus producing an unstable seco-DOPA that rearranges nonenzymatically to betalamic acid.</text>
</comment>
<comment type="catalytic activity">
    <reaction evidence="2">
        <text>L-dopa + O2 = 4-(L-alanin-3-yl)-2-hydroxy-cis,cis-muconate 6-semialdehyde + H(+)</text>
        <dbReference type="Rhea" id="RHEA:21220"/>
        <dbReference type="ChEBI" id="CHEBI:15378"/>
        <dbReference type="ChEBI" id="CHEBI:15379"/>
        <dbReference type="ChEBI" id="CHEBI:57504"/>
        <dbReference type="ChEBI" id="CHEBI:57639"/>
        <dbReference type="EC" id="1.13.11.29"/>
    </reaction>
</comment>
<comment type="cofactor">
    <cofactor evidence="1">
        <name>Zn(2+)</name>
        <dbReference type="ChEBI" id="CHEBI:29105"/>
    </cofactor>
    <text evidence="1">Binds 1 zinc ion per subunit.</text>
</comment>
<comment type="cofactor">
    <cofactor evidence="3">
        <name>Fe(2+)</name>
        <dbReference type="ChEBI" id="CHEBI:29033"/>
    </cofactor>
</comment>
<comment type="pathway">
    <text>Pigment biosynthesis; betalain biosynthesis.</text>
</comment>
<comment type="subcellular location">
    <subcellularLocation>
        <location evidence="3">Cytoplasm</location>
    </subcellularLocation>
</comment>
<comment type="tissue specificity">
    <text evidence="2">Expressed only in colored petals and pigmented tissues, absent from green stems and leaves.</text>
</comment>
<comment type="developmental stage">
    <text evidence="2">Very high expression in immature colored petals, then decreases in mature colored petals.</text>
</comment>
<comment type="miscellaneous">
    <text>In contrary to the fungal dioxygenase (AC P87064), this enzyme does not have a significant 2,3-ring-cleaving activity.</text>
</comment>
<comment type="similarity">
    <text evidence="3">Belongs to the DODA-type extradiol aromatic ring-opening dioxygenase family.</text>
</comment>
<proteinExistence type="evidence at protein level"/>
<accession>Q7XA48</accession>
<organism>
    <name type="scientific">Portulaca grandiflora</name>
    <name type="common">Rose moss</name>
    <dbReference type="NCBI Taxonomy" id="3583"/>
    <lineage>
        <taxon>Eukaryota</taxon>
        <taxon>Viridiplantae</taxon>
        <taxon>Streptophyta</taxon>
        <taxon>Embryophyta</taxon>
        <taxon>Tracheophyta</taxon>
        <taxon>Spermatophyta</taxon>
        <taxon>Magnoliopsida</taxon>
        <taxon>eudicotyledons</taxon>
        <taxon>Gunneridae</taxon>
        <taxon>Pentapetalae</taxon>
        <taxon>Caryophyllales</taxon>
        <taxon>Cactineae</taxon>
        <taxon>Portulacaceae</taxon>
        <taxon>Portulaca</taxon>
    </lineage>
</organism>
<gene>
    <name type="primary">DODA</name>
</gene>
<keyword id="KW-0963">Cytoplasm</keyword>
<keyword id="KW-0223">Dioxygenase</keyword>
<keyword id="KW-0408">Iron</keyword>
<keyword id="KW-0479">Metal-binding</keyword>
<keyword id="KW-0560">Oxidoreductase</keyword>
<keyword id="KW-0862">Zinc</keyword>
<protein>
    <recommendedName>
        <fullName>4,5-DOPA dioxygenase extradiol</fullName>
        <ecNumber>1.13.11.29</ecNumber>
    </recommendedName>
</protein>
<name>DODA_PORGR</name>
<sequence>MGVGKEVSFKESFFLSHGNPAMLADESFIARNFLLGWKKNVFPVKPKSILVVSAHWETDVPCVSAGQYPNVIYDFTEVPASMFQMKYPAPGCPKLAKRVQELLIAGGFKSAKLDEERGFDHSSWVPLSMMCPEADIPVCQLSVQPGLDATHHFNVGRALAPLKGEGVLFIGSGGAVHPSDDTPHWFDGVAPWAAEFDQWLEDALLEGRYEDVNNYQTKAPEGWKLAHPIPEHFLPLHVAMGAGGEKSKAELIYRTWDHGTLGYASYKFTSI</sequence>
<feature type="chain" id="PRO_0000079973" description="4,5-DOPA dioxygenase extradiol">
    <location>
        <begin position="1"/>
        <end position="271"/>
    </location>
</feature>
<feature type="binding site" evidence="1">
    <location>
        <position position="17"/>
    </location>
    <ligand>
        <name>Zn(2+)</name>
        <dbReference type="ChEBI" id="CHEBI:29105"/>
    </ligand>
</feature>
<feature type="binding site" evidence="1">
    <location>
        <position position="55"/>
    </location>
    <ligand>
        <name>Zn(2+)</name>
        <dbReference type="ChEBI" id="CHEBI:29105"/>
    </ligand>
</feature>
<feature type="binding site" evidence="1">
    <location>
        <position position="177"/>
    </location>
    <ligand>
        <name>Zn(2+)</name>
        <dbReference type="ChEBI" id="CHEBI:29105"/>
    </ligand>
</feature>
<feature type="binding site" evidence="1">
    <location>
        <position position="232"/>
    </location>
    <ligand>
        <name>Zn(2+)</name>
        <dbReference type="ChEBI" id="CHEBI:29105"/>
    </ligand>
</feature>
<dbReference type="EC" id="1.13.11.29"/>
<dbReference type="EMBL" id="AJ580598">
    <property type="protein sequence ID" value="CAE45178.1"/>
    <property type="molecule type" value="Genomic_DNA"/>
</dbReference>
<dbReference type="SMR" id="Q7XA48"/>
<dbReference type="BioCyc" id="MetaCyc:MONOMER-12753"/>
<dbReference type="UniPathway" id="UPA00278"/>
<dbReference type="GO" id="GO:0005737">
    <property type="term" value="C:cytoplasm"/>
    <property type="evidence" value="ECO:0007669"/>
    <property type="project" value="UniProtKB-SubCell"/>
</dbReference>
<dbReference type="GO" id="GO:0008198">
    <property type="term" value="F:ferrous iron binding"/>
    <property type="evidence" value="ECO:0007669"/>
    <property type="project" value="InterPro"/>
</dbReference>
<dbReference type="GO" id="GO:0050297">
    <property type="term" value="F:stizolobate synthase activity"/>
    <property type="evidence" value="ECO:0007669"/>
    <property type="project" value="UniProtKB-EC"/>
</dbReference>
<dbReference type="GO" id="GO:0008270">
    <property type="term" value="F:zinc ion binding"/>
    <property type="evidence" value="ECO:0007669"/>
    <property type="project" value="InterPro"/>
</dbReference>
<dbReference type="CDD" id="cd07363">
    <property type="entry name" value="45_DOPA_Dioxygenase"/>
    <property type="match status" value="1"/>
</dbReference>
<dbReference type="Gene3D" id="3.40.830.10">
    <property type="entry name" value="LigB-like"/>
    <property type="match status" value="1"/>
</dbReference>
<dbReference type="InterPro" id="IPR014436">
    <property type="entry name" value="Extradiol_dOase_DODA"/>
</dbReference>
<dbReference type="InterPro" id="IPR004183">
    <property type="entry name" value="Xdiol_dOase_suB"/>
</dbReference>
<dbReference type="PANTHER" id="PTHR30096">
    <property type="entry name" value="4,5-DOPA DIOXYGENASE EXTRADIOL-LIKE PROTEIN"/>
    <property type="match status" value="1"/>
</dbReference>
<dbReference type="PANTHER" id="PTHR30096:SF0">
    <property type="entry name" value="4,5-DOPA DIOXYGENASE EXTRADIOL-LIKE PROTEIN"/>
    <property type="match status" value="1"/>
</dbReference>
<dbReference type="Pfam" id="PF02900">
    <property type="entry name" value="LigB"/>
    <property type="match status" value="1"/>
</dbReference>
<dbReference type="PIRSF" id="PIRSF006157">
    <property type="entry name" value="Doxgns_DODA"/>
    <property type="match status" value="1"/>
</dbReference>
<dbReference type="SUPFAM" id="SSF53213">
    <property type="entry name" value="LigB-like"/>
    <property type="match status" value="1"/>
</dbReference>
<reference key="1">
    <citation type="journal article" date="2004" name="Plant Physiol.">
        <title>Characterization and functional identification of a novel plant 4,5-extradiol dioxygenase involved in betalain pigment biosynthesis in Portulaca grandiflora.</title>
        <authorList>
            <person name="Christinet L."/>
            <person name="Burdet F.X."/>
            <person name="Zaiko M."/>
            <person name="Hinz U.G."/>
            <person name="Zryd J.-P."/>
        </authorList>
    </citation>
    <scope>NUCLEOTIDE SEQUENCE [GENOMIC DNA]</scope>
    <scope>FUNCTION</scope>
    <scope>CATALYTIC ACTIVITY</scope>
    <scope>TISSUE SPECIFICITY</scope>
    <scope>DEVELOPMENTAL STAGE</scope>
</reference>